<feature type="chain" id="PRO_0000366286" description="Ribosomal RNA large subunit methyltransferase I">
    <location>
        <begin position="1"/>
        <end position="396"/>
    </location>
</feature>
<feature type="domain" description="PUA" evidence="1">
    <location>
        <begin position="2"/>
        <end position="81"/>
    </location>
</feature>
<sequence length="396" mass="44481">MTVRLILAKGREKSLLRRHPWIFSGAVQRLEGDALSGETIDILDSQGKWLARAAYSPESQILARVWTFQQDEVIDCAFFIRRLQQAQNWRDWLAQRDGLNGYRLIAGESDGLPGITIDRFQNFLVLQLLSAGAEYQRETLVSALQHCYPECSIYDRSDVSVRKKEGLPLTQGLICGEMPPALLPISENGMQLFVDIQQGHKTGFYLDQRDSRLAARNYANGRRVLNCFSYTGAFAVAALMGNCQQVISVDTSQSVLDIAKQNIELNQLDLSKTEFVRDDVFQLLRSYRAQGEKFDLIIMDPPKFVENKSQLASACRGYKDINMLAIQLLRPGGILLSFSCSGLMPVDLFQKILADAALDAGHDIQFIEQFRQAADHPVIAAYPEGLYLKGFACRVM</sequence>
<keyword id="KW-0963">Cytoplasm</keyword>
<keyword id="KW-0489">Methyltransferase</keyword>
<keyword id="KW-0694">RNA-binding</keyword>
<keyword id="KW-0698">rRNA processing</keyword>
<keyword id="KW-0949">S-adenosyl-L-methionine</keyword>
<keyword id="KW-0808">Transferase</keyword>
<dbReference type="EC" id="2.1.1.191" evidence="1"/>
<dbReference type="EMBL" id="CP001048">
    <property type="protein sequence ID" value="ACC88541.1"/>
    <property type="molecule type" value="Genomic_DNA"/>
</dbReference>
<dbReference type="RefSeq" id="WP_002213052.1">
    <property type="nucleotide sequence ID" value="NZ_CP009780.1"/>
</dbReference>
<dbReference type="SMR" id="B2JYU4"/>
<dbReference type="GeneID" id="57977118"/>
<dbReference type="KEGG" id="ypb:YPTS_1569"/>
<dbReference type="PATRIC" id="fig|502801.10.peg.934"/>
<dbReference type="GO" id="GO:0005737">
    <property type="term" value="C:cytoplasm"/>
    <property type="evidence" value="ECO:0007669"/>
    <property type="project" value="UniProtKB-SubCell"/>
</dbReference>
<dbReference type="GO" id="GO:0003723">
    <property type="term" value="F:RNA binding"/>
    <property type="evidence" value="ECO:0007669"/>
    <property type="project" value="UniProtKB-KW"/>
</dbReference>
<dbReference type="GO" id="GO:0016434">
    <property type="term" value="F:rRNA (cytosine) methyltransferase activity"/>
    <property type="evidence" value="ECO:0007669"/>
    <property type="project" value="UniProtKB-UniRule"/>
</dbReference>
<dbReference type="CDD" id="cd02440">
    <property type="entry name" value="AdoMet_MTases"/>
    <property type="match status" value="1"/>
</dbReference>
<dbReference type="CDD" id="cd21153">
    <property type="entry name" value="PUA_RlmI"/>
    <property type="match status" value="1"/>
</dbReference>
<dbReference type="CDD" id="cd11572">
    <property type="entry name" value="RlmI_M_like"/>
    <property type="match status" value="1"/>
</dbReference>
<dbReference type="Gene3D" id="2.30.130.10">
    <property type="entry name" value="PUA domain"/>
    <property type="match status" value="1"/>
</dbReference>
<dbReference type="Gene3D" id="3.30.750.80">
    <property type="entry name" value="RNA methyltransferase domain (HRMD) like"/>
    <property type="match status" value="1"/>
</dbReference>
<dbReference type="Gene3D" id="3.40.50.150">
    <property type="entry name" value="Vaccinia Virus protein VP39"/>
    <property type="match status" value="1"/>
</dbReference>
<dbReference type="HAMAP" id="MF_01857">
    <property type="entry name" value="23SrRNA_methyltr_I"/>
    <property type="match status" value="1"/>
</dbReference>
<dbReference type="InterPro" id="IPR002478">
    <property type="entry name" value="PUA"/>
</dbReference>
<dbReference type="InterPro" id="IPR015947">
    <property type="entry name" value="PUA-like_sf"/>
</dbReference>
<dbReference type="InterPro" id="IPR036974">
    <property type="entry name" value="PUA_sf"/>
</dbReference>
<dbReference type="InterPro" id="IPR023542">
    <property type="entry name" value="RLMI"/>
</dbReference>
<dbReference type="InterPro" id="IPR041532">
    <property type="entry name" value="RlmI-like_PUA"/>
</dbReference>
<dbReference type="InterPro" id="IPR019614">
    <property type="entry name" value="SAM-dep_methyl-trfase"/>
</dbReference>
<dbReference type="InterPro" id="IPR029063">
    <property type="entry name" value="SAM-dependent_MTases_sf"/>
</dbReference>
<dbReference type="NCBIfam" id="NF011707">
    <property type="entry name" value="PRK15128.1"/>
    <property type="match status" value="1"/>
</dbReference>
<dbReference type="PANTHER" id="PTHR42873">
    <property type="entry name" value="RIBOSOMAL RNA LARGE SUBUNIT METHYLTRANSFERASE"/>
    <property type="match status" value="1"/>
</dbReference>
<dbReference type="PANTHER" id="PTHR42873:SF1">
    <property type="entry name" value="S-ADENOSYLMETHIONINE-DEPENDENT METHYLTRANSFERASE DOMAIN-CONTAINING PROTEIN"/>
    <property type="match status" value="1"/>
</dbReference>
<dbReference type="Pfam" id="PF10672">
    <property type="entry name" value="Methyltrans_SAM"/>
    <property type="match status" value="1"/>
</dbReference>
<dbReference type="Pfam" id="PF17785">
    <property type="entry name" value="PUA_3"/>
    <property type="match status" value="1"/>
</dbReference>
<dbReference type="SMART" id="SM00359">
    <property type="entry name" value="PUA"/>
    <property type="match status" value="1"/>
</dbReference>
<dbReference type="SUPFAM" id="SSF88697">
    <property type="entry name" value="PUA domain-like"/>
    <property type="match status" value="1"/>
</dbReference>
<dbReference type="SUPFAM" id="SSF53335">
    <property type="entry name" value="S-adenosyl-L-methionine-dependent methyltransferases"/>
    <property type="match status" value="1"/>
</dbReference>
<dbReference type="PROSITE" id="PS50890">
    <property type="entry name" value="PUA"/>
    <property type="match status" value="1"/>
</dbReference>
<comment type="function">
    <text evidence="1">Specifically methylates the cytosine at position 1962 (m5C1962) of 23S rRNA.</text>
</comment>
<comment type="catalytic activity">
    <reaction evidence="1">
        <text>cytidine(1962) in 23S rRNA + S-adenosyl-L-methionine = 5-methylcytidine(1962) in 23S rRNA + S-adenosyl-L-homocysteine + H(+)</text>
        <dbReference type="Rhea" id="RHEA:42912"/>
        <dbReference type="Rhea" id="RHEA-COMP:10382"/>
        <dbReference type="Rhea" id="RHEA-COMP:10386"/>
        <dbReference type="ChEBI" id="CHEBI:15378"/>
        <dbReference type="ChEBI" id="CHEBI:57856"/>
        <dbReference type="ChEBI" id="CHEBI:59789"/>
        <dbReference type="ChEBI" id="CHEBI:74483"/>
        <dbReference type="ChEBI" id="CHEBI:82748"/>
        <dbReference type="EC" id="2.1.1.191"/>
    </reaction>
</comment>
<comment type="subcellular location">
    <subcellularLocation>
        <location evidence="1">Cytoplasm</location>
    </subcellularLocation>
</comment>
<comment type="similarity">
    <text evidence="1">Belongs to the methyltransferase superfamily. RlmI family.</text>
</comment>
<proteinExistence type="inferred from homology"/>
<name>RLMI_YERPB</name>
<evidence type="ECO:0000255" key="1">
    <source>
        <dbReference type="HAMAP-Rule" id="MF_01857"/>
    </source>
</evidence>
<protein>
    <recommendedName>
        <fullName evidence="1">Ribosomal RNA large subunit methyltransferase I</fullName>
        <ecNumber evidence="1">2.1.1.191</ecNumber>
    </recommendedName>
    <alternativeName>
        <fullName evidence="1">23S rRNA m5C1962 methyltransferase</fullName>
    </alternativeName>
    <alternativeName>
        <fullName evidence="1">rRNA (cytosine-C(5)-)-methyltransferase RlmI</fullName>
    </alternativeName>
</protein>
<organism>
    <name type="scientific">Yersinia pseudotuberculosis serotype IB (strain PB1/+)</name>
    <dbReference type="NCBI Taxonomy" id="502801"/>
    <lineage>
        <taxon>Bacteria</taxon>
        <taxon>Pseudomonadati</taxon>
        <taxon>Pseudomonadota</taxon>
        <taxon>Gammaproteobacteria</taxon>
        <taxon>Enterobacterales</taxon>
        <taxon>Yersiniaceae</taxon>
        <taxon>Yersinia</taxon>
    </lineage>
</organism>
<accession>B2JYU4</accession>
<gene>
    <name evidence="1" type="primary">rlmI</name>
    <name type="ordered locus">YPTS_1569</name>
</gene>
<reference key="1">
    <citation type="submission" date="2008-04" db="EMBL/GenBank/DDBJ databases">
        <title>Complete sequence of Yersinia pseudotuberculosis PB1/+.</title>
        <authorList>
            <person name="Copeland A."/>
            <person name="Lucas S."/>
            <person name="Lapidus A."/>
            <person name="Glavina del Rio T."/>
            <person name="Dalin E."/>
            <person name="Tice H."/>
            <person name="Bruce D."/>
            <person name="Goodwin L."/>
            <person name="Pitluck S."/>
            <person name="Munk A.C."/>
            <person name="Brettin T."/>
            <person name="Detter J.C."/>
            <person name="Han C."/>
            <person name="Tapia R."/>
            <person name="Schmutz J."/>
            <person name="Larimer F."/>
            <person name="Land M."/>
            <person name="Hauser L."/>
            <person name="Challacombe J.F."/>
            <person name="Green L."/>
            <person name="Lindler L.E."/>
            <person name="Nikolich M.P."/>
            <person name="Richardson P."/>
        </authorList>
    </citation>
    <scope>NUCLEOTIDE SEQUENCE [LARGE SCALE GENOMIC DNA]</scope>
    <source>
        <strain>PB1/+</strain>
    </source>
</reference>